<reference key="1">
    <citation type="journal article" date="2006" name="Environ. Microbiol.">
        <title>Whole genome analysis of the marine Bacteroidetes'Gramella forsetii' reveals adaptations to degradation of polymeric organic matter.</title>
        <authorList>
            <person name="Bauer M."/>
            <person name="Kube M."/>
            <person name="Teeling H."/>
            <person name="Richter M."/>
            <person name="Lombardot T."/>
            <person name="Allers E."/>
            <person name="Wuerdemann C.A."/>
            <person name="Quast C."/>
            <person name="Kuhl H."/>
            <person name="Knaust F."/>
            <person name="Woebken D."/>
            <person name="Bischof K."/>
            <person name="Mussmann M."/>
            <person name="Choudhuri J.V."/>
            <person name="Meyer F."/>
            <person name="Reinhardt R."/>
            <person name="Amann R.I."/>
            <person name="Gloeckner F.O."/>
        </authorList>
    </citation>
    <scope>NUCLEOTIDE SEQUENCE [LARGE SCALE GENOMIC DNA]</scope>
    <source>
        <strain>DSM 17595 / CGMCC 1.15422 / KT0803</strain>
    </source>
</reference>
<dbReference type="EC" id="2.7.7.6" evidence="1"/>
<dbReference type="EMBL" id="CU207366">
    <property type="protein sequence ID" value="CAL67333.1"/>
    <property type="molecule type" value="Genomic_DNA"/>
</dbReference>
<dbReference type="RefSeq" id="WP_011710236.1">
    <property type="nucleotide sequence ID" value="NC_008571.1"/>
</dbReference>
<dbReference type="SMR" id="A0M3Y8"/>
<dbReference type="STRING" id="411154.GFO_2369"/>
<dbReference type="KEGG" id="gfo:GFO_2369"/>
<dbReference type="eggNOG" id="COG0086">
    <property type="taxonomic scope" value="Bacteria"/>
</dbReference>
<dbReference type="HOGENOM" id="CLU_000524_3_1_10"/>
<dbReference type="OrthoDB" id="9815296at2"/>
<dbReference type="Proteomes" id="UP000000755">
    <property type="component" value="Chromosome"/>
</dbReference>
<dbReference type="GO" id="GO:0000428">
    <property type="term" value="C:DNA-directed RNA polymerase complex"/>
    <property type="evidence" value="ECO:0007669"/>
    <property type="project" value="UniProtKB-KW"/>
</dbReference>
<dbReference type="GO" id="GO:0003677">
    <property type="term" value="F:DNA binding"/>
    <property type="evidence" value="ECO:0007669"/>
    <property type="project" value="UniProtKB-UniRule"/>
</dbReference>
<dbReference type="GO" id="GO:0003899">
    <property type="term" value="F:DNA-directed RNA polymerase activity"/>
    <property type="evidence" value="ECO:0007669"/>
    <property type="project" value="UniProtKB-UniRule"/>
</dbReference>
<dbReference type="GO" id="GO:0000287">
    <property type="term" value="F:magnesium ion binding"/>
    <property type="evidence" value="ECO:0007669"/>
    <property type="project" value="UniProtKB-UniRule"/>
</dbReference>
<dbReference type="GO" id="GO:0008270">
    <property type="term" value="F:zinc ion binding"/>
    <property type="evidence" value="ECO:0007669"/>
    <property type="project" value="UniProtKB-UniRule"/>
</dbReference>
<dbReference type="GO" id="GO:0006351">
    <property type="term" value="P:DNA-templated transcription"/>
    <property type="evidence" value="ECO:0007669"/>
    <property type="project" value="UniProtKB-UniRule"/>
</dbReference>
<dbReference type="CDD" id="cd02655">
    <property type="entry name" value="RNAP_beta'_C"/>
    <property type="match status" value="1"/>
</dbReference>
<dbReference type="CDD" id="cd01609">
    <property type="entry name" value="RNAP_beta'_N"/>
    <property type="match status" value="1"/>
</dbReference>
<dbReference type="Gene3D" id="1.10.132.30">
    <property type="match status" value="1"/>
</dbReference>
<dbReference type="Gene3D" id="1.10.150.390">
    <property type="match status" value="1"/>
</dbReference>
<dbReference type="Gene3D" id="1.10.1790.20">
    <property type="match status" value="1"/>
</dbReference>
<dbReference type="Gene3D" id="1.10.40.90">
    <property type="match status" value="1"/>
</dbReference>
<dbReference type="Gene3D" id="2.40.40.20">
    <property type="match status" value="1"/>
</dbReference>
<dbReference type="Gene3D" id="2.40.50.100">
    <property type="match status" value="3"/>
</dbReference>
<dbReference type="Gene3D" id="4.10.860.120">
    <property type="entry name" value="RNA polymerase II, clamp domain"/>
    <property type="match status" value="1"/>
</dbReference>
<dbReference type="Gene3D" id="1.10.274.100">
    <property type="entry name" value="RNA polymerase Rpb1, domain 3"/>
    <property type="match status" value="1"/>
</dbReference>
<dbReference type="HAMAP" id="MF_01322">
    <property type="entry name" value="RNApol_bact_RpoC"/>
    <property type="match status" value="1"/>
</dbReference>
<dbReference type="InterPro" id="IPR045867">
    <property type="entry name" value="DNA-dir_RpoC_beta_prime"/>
</dbReference>
<dbReference type="InterPro" id="IPR012754">
    <property type="entry name" value="DNA-dir_RpoC_beta_prime_bact"/>
</dbReference>
<dbReference type="InterPro" id="IPR000722">
    <property type="entry name" value="RNA_pol_asu"/>
</dbReference>
<dbReference type="InterPro" id="IPR006592">
    <property type="entry name" value="RNA_pol_N"/>
</dbReference>
<dbReference type="InterPro" id="IPR007080">
    <property type="entry name" value="RNA_pol_Rpb1_1"/>
</dbReference>
<dbReference type="InterPro" id="IPR007066">
    <property type="entry name" value="RNA_pol_Rpb1_3"/>
</dbReference>
<dbReference type="InterPro" id="IPR042102">
    <property type="entry name" value="RNA_pol_Rpb1_3_sf"/>
</dbReference>
<dbReference type="InterPro" id="IPR007083">
    <property type="entry name" value="RNA_pol_Rpb1_4"/>
</dbReference>
<dbReference type="InterPro" id="IPR007081">
    <property type="entry name" value="RNA_pol_Rpb1_5"/>
</dbReference>
<dbReference type="InterPro" id="IPR044893">
    <property type="entry name" value="RNA_pol_Rpb1_clamp_domain"/>
</dbReference>
<dbReference type="InterPro" id="IPR038120">
    <property type="entry name" value="Rpb1_funnel_sf"/>
</dbReference>
<dbReference type="NCBIfam" id="TIGR02386">
    <property type="entry name" value="rpoC_TIGR"/>
    <property type="match status" value="1"/>
</dbReference>
<dbReference type="PANTHER" id="PTHR19376">
    <property type="entry name" value="DNA-DIRECTED RNA POLYMERASE"/>
    <property type="match status" value="1"/>
</dbReference>
<dbReference type="PANTHER" id="PTHR19376:SF54">
    <property type="entry name" value="DNA-DIRECTED RNA POLYMERASE SUBUNIT BETA"/>
    <property type="match status" value="1"/>
</dbReference>
<dbReference type="Pfam" id="PF04997">
    <property type="entry name" value="RNA_pol_Rpb1_1"/>
    <property type="match status" value="1"/>
</dbReference>
<dbReference type="Pfam" id="PF00623">
    <property type="entry name" value="RNA_pol_Rpb1_2"/>
    <property type="match status" value="2"/>
</dbReference>
<dbReference type="Pfam" id="PF04983">
    <property type="entry name" value="RNA_pol_Rpb1_3"/>
    <property type="match status" value="1"/>
</dbReference>
<dbReference type="Pfam" id="PF05000">
    <property type="entry name" value="RNA_pol_Rpb1_4"/>
    <property type="match status" value="1"/>
</dbReference>
<dbReference type="Pfam" id="PF04998">
    <property type="entry name" value="RNA_pol_Rpb1_5"/>
    <property type="match status" value="1"/>
</dbReference>
<dbReference type="SMART" id="SM00663">
    <property type="entry name" value="RPOLA_N"/>
    <property type="match status" value="1"/>
</dbReference>
<dbReference type="SUPFAM" id="SSF64484">
    <property type="entry name" value="beta and beta-prime subunits of DNA dependent RNA-polymerase"/>
    <property type="match status" value="1"/>
</dbReference>
<name>RPOC_CHRFK</name>
<protein>
    <recommendedName>
        <fullName evidence="1">DNA-directed RNA polymerase subunit beta'</fullName>
        <shortName evidence="1">RNAP subunit beta'</shortName>
        <ecNumber evidence="1">2.7.7.6</ecNumber>
    </recommendedName>
    <alternativeName>
        <fullName evidence="1">RNA polymerase subunit beta'</fullName>
    </alternativeName>
    <alternativeName>
        <fullName evidence="1">Transcriptase subunit beta'</fullName>
    </alternativeName>
</protein>
<evidence type="ECO:0000255" key="1">
    <source>
        <dbReference type="HAMAP-Rule" id="MF_01322"/>
    </source>
</evidence>
<evidence type="ECO:0000256" key="2">
    <source>
        <dbReference type="SAM" id="MobiDB-lite"/>
    </source>
</evidence>
<proteinExistence type="inferred from homology"/>
<organism>
    <name type="scientific">Christiangramia forsetii (strain DSM 17595 / CGMCC 1.15422 / KT0803)</name>
    <name type="common">Gramella forsetii</name>
    <dbReference type="NCBI Taxonomy" id="411154"/>
    <lineage>
        <taxon>Bacteria</taxon>
        <taxon>Pseudomonadati</taxon>
        <taxon>Bacteroidota</taxon>
        <taxon>Flavobacteriia</taxon>
        <taxon>Flavobacteriales</taxon>
        <taxon>Flavobacteriaceae</taxon>
        <taxon>Christiangramia</taxon>
    </lineage>
</organism>
<comment type="function">
    <text evidence="1">DNA-dependent RNA polymerase catalyzes the transcription of DNA into RNA using the four ribonucleoside triphosphates as substrates.</text>
</comment>
<comment type="catalytic activity">
    <reaction evidence="1">
        <text>RNA(n) + a ribonucleoside 5'-triphosphate = RNA(n+1) + diphosphate</text>
        <dbReference type="Rhea" id="RHEA:21248"/>
        <dbReference type="Rhea" id="RHEA-COMP:14527"/>
        <dbReference type="Rhea" id="RHEA-COMP:17342"/>
        <dbReference type="ChEBI" id="CHEBI:33019"/>
        <dbReference type="ChEBI" id="CHEBI:61557"/>
        <dbReference type="ChEBI" id="CHEBI:140395"/>
        <dbReference type="EC" id="2.7.7.6"/>
    </reaction>
</comment>
<comment type="cofactor">
    <cofactor evidence="1">
        <name>Mg(2+)</name>
        <dbReference type="ChEBI" id="CHEBI:18420"/>
    </cofactor>
    <text evidence="1">Binds 1 Mg(2+) ion per subunit.</text>
</comment>
<comment type="cofactor">
    <cofactor evidence="1">
        <name>Zn(2+)</name>
        <dbReference type="ChEBI" id="CHEBI:29105"/>
    </cofactor>
    <text evidence="1">Binds 2 Zn(2+) ions per subunit.</text>
</comment>
<comment type="subunit">
    <text evidence="1">The RNAP catalytic core consists of 2 alpha, 1 beta, 1 beta' and 1 omega subunit. When a sigma factor is associated with the core the holoenzyme is formed, which can initiate transcription.</text>
</comment>
<comment type="similarity">
    <text evidence="1">Belongs to the RNA polymerase beta' chain family.</text>
</comment>
<keyword id="KW-0240">DNA-directed RNA polymerase</keyword>
<keyword id="KW-0460">Magnesium</keyword>
<keyword id="KW-0479">Metal-binding</keyword>
<keyword id="KW-0548">Nucleotidyltransferase</keyword>
<keyword id="KW-0804">Transcription</keyword>
<keyword id="KW-0808">Transferase</keyword>
<keyword id="KW-0862">Zinc</keyword>
<accession>A0M3Y8</accession>
<sequence length="1433" mass="160104">MARNNDKNTVQRFNQISIGLASPESILAESRGEVLKPETINYRTHKPERDGLFCERIFGPVKDYECACGKYKRIRYKGIVCDRCGVEVTEKKVRRDRVGHINLVVPVAHIWYFRSLPNKIGYLLGLPSKKLDMIIYYERYVVIQAGNAKNEEGEPLKKMDFLTEEEYLNILDELPQENQYLDDSDPNKFIAKMGAECLIEILKRIDLDELSYELRHKANNETSKQRKTEALKRLQVVEALRDANKNRENNPEWMIMKVVPVIPPELRPLVPLDGGRFATSDLNDLYRRVIIRNNRLKRLMEIKAPEVILRNEKRMLQESVDSLFDNTRKSSAVKTDSNRPLKSLSDSLKGKQGRFRQNLLGKRVDYSARSVIVVGPELKMFECGLPKNMAAELYKPFIIRKLIERGIVKTVKSAKKIIDKKEPVVWDILENVLKGHPVLLNRAPTLHRLGIQAFQPKLIEGKAIQLHPLACTAFNADFDGDQMAVHLPLGPEAILEAQLLMLASHNILNPANGSPITVPSQDMVLGLYYMTKHKKTTKDETVIGEGLTFYSAEELVIAYNQKRVDLNAGIKIRTKDYNEEGELVYMIKDTTVGRVLFNEAVPEKAGYINEVLTKKSLREIIGKILKITSVPETSEFLDEIKGLGYGFAFRGGLSFSLGDIIIPEEKQSMIDEANEQVEGIIGNYNMGLITNNERYNQVIDIWTSTNAGLTDLAMKRIREDKQGFNSVYMMLDSGARGSKEQIRQLTGMRGLMAKPKKSNSGGGEIIENPILSNFKEGLSILEYFISTHGARKGLADTALKTADAGYLTRRLVDVSQDVIVNEDDCGTLRGVEVKPLKKNEEIVESLGERILGRISLNDVVNPSTQEHIVATNEEITEEIVAKIEAAPIESVEVRSPLTCEAKKGICIKCYGRNLATNKIVQTGEAVGVVAAQSIGEPGTQLTLRTFHVGGIAGNISEDNKLEAKFAGVAEIEDLKVVKGEAPDGGTADIVISRTAELKIKDKKTGVVLSNNNIPYGSQININDGATVKEGEVICTWDPYNGVIISEFAGKIKYENVEQGVTYQVEIDEQTGFQEKVISESRNKKLIPTLHILGKKDEVIRSYNLPVGAHLMVDNEEKIGVGKILVKIPRKSSKAGDITGGLPRVTELFEARNPSNPAVVSEIDGVVSFGKIKRGNREIIVESKLGEVKKYLVKLSNQILVQENDYVRAGMPLSDGSITPEDILNIKGPNAVQQYLVNEVQEVYRLQGVKINDKHFEVVVRQMMRKVRIVDPGDTIFLENQLVHKADFIEENNKLFGMKVIEDAGDSEKLKAGQIITPRDLRDENSILRREDKNLATARDVITATANPVLQGITRASLQTKSFISAASFQETTKVLNEAAVSGKIDYLEGLKENVIVGHRIPAGTGMRKYDSIIVGSKEEFDQMLEKKQEVNYN</sequence>
<feature type="chain" id="PRO_0000308836" description="DNA-directed RNA polymerase subunit beta'">
    <location>
        <begin position="1"/>
        <end position="1433"/>
    </location>
</feature>
<feature type="region of interest" description="Disordered" evidence="2">
    <location>
        <begin position="328"/>
        <end position="347"/>
    </location>
</feature>
<feature type="compositionally biased region" description="Polar residues" evidence="2">
    <location>
        <begin position="329"/>
        <end position="346"/>
    </location>
</feature>
<feature type="binding site" evidence="1">
    <location>
        <position position="66"/>
    </location>
    <ligand>
        <name>Zn(2+)</name>
        <dbReference type="ChEBI" id="CHEBI:29105"/>
        <label>1</label>
    </ligand>
</feature>
<feature type="binding site" evidence="1">
    <location>
        <position position="68"/>
    </location>
    <ligand>
        <name>Zn(2+)</name>
        <dbReference type="ChEBI" id="CHEBI:29105"/>
        <label>1</label>
    </ligand>
</feature>
<feature type="binding site" evidence="1">
    <location>
        <position position="81"/>
    </location>
    <ligand>
        <name>Zn(2+)</name>
        <dbReference type="ChEBI" id="CHEBI:29105"/>
        <label>1</label>
    </ligand>
</feature>
<feature type="binding site" evidence="1">
    <location>
        <position position="84"/>
    </location>
    <ligand>
        <name>Zn(2+)</name>
        <dbReference type="ChEBI" id="CHEBI:29105"/>
        <label>1</label>
    </ligand>
</feature>
<feature type="binding site" evidence="1">
    <location>
        <position position="477"/>
    </location>
    <ligand>
        <name>Mg(2+)</name>
        <dbReference type="ChEBI" id="CHEBI:18420"/>
    </ligand>
</feature>
<feature type="binding site" evidence="1">
    <location>
        <position position="479"/>
    </location>
    <ligand>
        <name>Mg(2+)</name>
        <dbReference type="ChEBI" id="CHEBI:18420"/>
    </ligand>
</feature>
<feature type="binding site" evidence="1">
    <location>
        <position position="481"/>
    </location>
    <ligand>
        <name>Mg(2+)</name>
        <dbReference type="ChEBI" id="CHEBI:18420"/>
    </ligand>
</feature>
<feature type="binding site" evidence="1">
    <location>
        <position position="825"/>
    </location>
    <ligand>
        <name>Zn(2+)</name>
        <dbReference type="ChEBI" id="CHEBI:29105"/>
        <label>2</label>
    </ligand>
</feature>
<feature type="binding site" evidence="1">
    <location>
        <position position="899"/>
    </location>
    <ligand>
        <name>Zn(2+)</name>
        <dbReference type="ChEBI" id="CHEBI:29105"/>
        <label>2</label>
    </ligand>
</feature>
<feature type="binding site" evidence="1">
    <location>
        <position position="906"/>
    </location>
    <ligand>
        <name>Zn(2+)</name>
        <dbReference type="ChEBI" id="CHEBI:29105"/>
        <label>2</label>
    </ligand>
</feature>
<feature type="binding site" evidence="1">
    <location>
        <position position="909"/>
    </location>
    <ligand>
        <name>Zn(2+)</name>
        <dbReference type="ChEBI" id="CHEBI:29105"/>
        <label>2</label>
    </ligand>
</feature>
<gene>
    <name evidence="1" type="primary">rpoC</name>
    <name type="ordered locus">GFO_2369</name>
</gene>